<dbReference type="EC" id="6.3.5.2" evidence="1"/>
<dbReference type="EMBL" id="CP000681">
    <property type="protein sequence ID" value="ABP76366.1"/>
    <property type="molecule type" value="Genomic_DNA"/>
</dbReference>
<dbReference type="SMR" id="A4Y8T3"/>
<dbReference type="STRING" id="319224.Sputcn32_2645"/>
<dbReference type="KEGG" id="spc:Sputcn32_2645"/>
<dbReference type="eggNOG" id="COG0518">
    <property type="taxonomic scope" value="Bacteria"/>
</dbReference>
<dbReference type="eggNOG" id="COG0519">
    <property type="taxonomic scope" value="Bacteria"/>
</dbReference>
<dbReference type="HOGENOM" id="CLU_014340_0_5_6"/>
<dbReference type="UniPathway" id="UPA00189">
    <property type="reaction ID" value="UER00296"/>
</dbReference>
<dbReference type="GO" id="GO:0005829">
    <property type="term" value="C:cytosol"/>
    <property type="evidence" value="ECO:0007669"/>
    <property type="project" value="TreeGrafter"/>
</dbReference>
<dbReference type="GO" id="GO:0005524">
    <property type="term" value="F:ATP binding"/>
    <property type="evidence" value="ECO:0007669"/>
    <property type="project" value="UniProtKB-UniRule"/>
</dbReference>
<dbReference type="GO" id="GO:0003921">
    <property type="term" value="F:GMP synthase activity"/>
    <property type="evidence" value="ECO:0007669"/>
    <property type="project" value="InterPro"/>
</dbReference>
<dbReference type="CDD" id="cd01742">
    <property type="entry name" value="GATase1_GMP_Synthase"/>
    <property type="match status" value="1"/>
</dbReference>
<dbReference type="CDD" id="cd01997">
    <property type="entry name" value="GMP_synthase_C"/>
    <property type="match status" value="1"/>
</dbReference>
<dbReference type="FunFam" id="3.30.300.10:FF:000002">
    <property type="entry name" value="GMP synthase [glutamine-hydrolyzing]"/>
    <property type="match status" value="1"/>
</dbReference>
<dbReference type="FunFam" id="3.40.50.620:FF:000001">
    <property type="entry name" value="GMP synthase [glutamine-hydrolyzing]"/>
    <property type="match status" value="1"/>
</dbReference>
<dbReference type="FunFam" id="3.40.50.880:FF:000001">
    <property type="entry name" value="GMP synthase [glutamine-hydrolyzing]"/>
    <property type="match status" value="1"/>
</dbReference>
<dbReference type="Gene3D" id="3.30.300.10">
    <property type="match status" value="1"/>
</dbReference>
<dbReference type="Gene3D" id="3.40.50.880">
    <property type="match status" value="1"/>
</dbReference>
<dbReference type="Gene3D" id="3.40.50.620">
    <property type="entry name" value="HUPs"/>
    <property type="match status" value="1"/>
</dbReference>
<dbReference type="HAMAP" id="MF_00344">
    <property type="entry name" value="GMP_synthase"/>
    <property type="match status" value="1"/>
</dbReference>
<dbReference type="InterPro" id="IPR029062">
    <property type="entry name" value="Class_I_gatase-like"/>
</dbReference>
<dbReference type="InterPro" id="IPR017926">
    <property type="entry name" value="GATASE"/>
</dbReference>
<dbReference type="InterPro" id="IPR001674">
    <property type="entry name" value="GMP_synth_C"/>
</dbReference>
<dbReference type="InterPro" id="IPR004739">
    <property type="entry name" value="GMP_synth_GATase"/>
</dbReference>
<dbReference type="InterPro" id="IPR022955">
    <property type="entry name" value="GMP_synthase"/>
</dbReference>
<dbReference type="InterPro" id="IPR025777">
    <property type="entry name" value="GMPS_ATP_PPase_dom"/>
</dbReference>
<dbReference type="InterPro" id="IPR022310">
    <property type="entry name" value="NAD/GMP_synthase"/>
</dbReference>
<dbReference type="InterPro" id="IPR014729">
    <property type="entry name" value="Rossmann-like_a/b/a_fold"/>
</dbReference>
<dbReference type="NCBIfam" id="TIGR00884">
    <property type="entry name" value="guaA_Cterm"/>
    <property type="match status" value="1"/>
</dbReference>
<dbReference type="NCBIfam" id="TIGR00888">
    <property type="entry name" value="guaA_Nterm"/>
    <property type="match status" value="1"/>
</dbReference>
<dbReference type="NCBIfam" id="NF000848">
    <property type="entry name" value="PRK00074.1"/>
    <property type="match status" value="1"/>
</dbReference>
<dbReference type="PANTHER" id="PTHR11922:SF2">
    <property type="entry name" value="GMP SYNTHASE [GLUTAMINE-HYDROLYZING]"/>
    <property type="match status" value="1"/>
</dbReference>
<dbReference type="PANTHER" id="PTHR11922">
    <property type="entry name" value="GMP SYNTHASE-RELATED"/>
    <property type="match status" value="1"/>
</dbReference>
<dbReference type="Pfam" id="PF00117">
    <property type="entry name" value="GATase"/>
    <property type="match status" value="1"/>
</dbReference>
<dbReference type="Pfam" id="PF00958">
    <property type="entry name" value="GMP_synt_C"/>
    <property type="match status" value="1"/>
</dbReference>
<dbReference type="Pfam" id="PF02540">
    <property type="entry name" value="NAD_synthase"/>
    <property type="match status" value="1"/>
</dbReference>
<dbReference type="PRINTS" id="PR00097">
    <property type="entry name" value="ANTSNTHASEII"/>
</dbReference>
<dbReference type="PRINTS" id="PR00099">
    <property type="entry name" value="CPSGATASE"/>
</dbReference>
<dbReference type="PRINTS" id="PR00096">
    <property type="entry name" value="GATASE"/>
</dbReference>
<dbReference type="SUPFAM" id="SSF52402">
    <property type="entry name" value="Adenine nucleotide alpha hydrolases-like"/>
    <property type="match status" value="1"/>
</dbReference>
<dbReference type="SUPFAM" id="SSF52317">
    <property type="entry name" value="Class I glutamine amidotransferase-like"/>
    <property type="match status" value="1"/>
</dbReference>
<dbReference type="SUPFAM" id="SSF54810">
    <property type="entry name" value="GMP synthetase C-terminal dimerisation domain"/>
    <property type="match status" value="1"/>
</dbReference>
<dbReference type="PROSITE" id="PS51273">
    <property type="entry name" value="GATASE_TYPE_1"/>
    <property type="match status" value="1"/>
</dbReference>
<dbReference type="PROSITE" id="PS51553">
    <property type="entry name" value="GMPS_ATP_PPASE"/>
    <property type="match status" value="1"/>
</dbReference>
<comment type="function">
    <text evidence="1">Catalyzes the synthesis of GMP from XMP.</text>
</comment>
<comment type="catalytic activity">
    <reaction evidence="1">
        <text>XMP + L-glutamine + ATP + H2O = GMP + L-glutamate + AMP + diphosphate + 2 H(+)</text>
        <dbReference type="Rhea" id="RHEA:11680"/>
        <dbReference type="ChEBI" id="CHEBI:15377"/>
        <dbReference type="ChEBI" id="CHEBI:15378"/>
        <dbReference type="ChEBI" id="CHEBI:29985"/>
        <dbReference type="ChEBI" id="CHEBI:30616"/>
        <dbReference type="ChEBI" id="CHEBI:33019"/>
        <dbReference type="ChEBI" id="CHEBI:57464"/>
        <dbReference type="ChEBI" id="CHEBI:58115"/>
        <dbReference type="ChEBI" id="CHEBI:58359"/>
        <dbReference type="ChEBI" id="CHEBI:456215"/>
        <dbReference type="EC" id="6.3.5.2"/>
    </reaction>
</comment>
<comment type="pathway">
    <text evidence="1">Purine metabolism; GMP biosynthesis; GMP from XMP (L-Gln route): step 1/1.</text>
</comment>
<comment type="subunit">
    <text evidence="1">Homodimer.</text>
</comment>
<reference key="1">
    <citation type="submission" date="2007-04" db="EMBL/GenBank/DDBJ databases">
        <title>Complete sequence of Shewanella putrefaciens CN-32.</title>
        <authorList>
            <consortium name="US DOE Joint Genome Institute"/>
            <person name="Copeland A."/>
            <person name="Lucas S."/>
            <person name="Lapidus A."/>
            <person name="Barry K."/>
            <person name="Detter J.C."/>
            <person name="Glavina del Rio T."/>
            <person name="Hammon N."/>
            <person name="Israni S."/>
            <person name="Dalin E."/>
            <person name="Tice H."/>
            <person name="Pitluck S."/>
            <person name="Chain P."/>
            <person name="Malfatti S."/>
            <person name="Shin M."/>
            <person name="Vergez L."/>
            <person name="Schmutz J."/>
            <person name="Larimer F."/>
            <person name="Land M."/>
            <person name="Hauser L."/>
            <person name="Kyrpides N."/>
            <person name="Mikhailova N."/>
            <person name="Romine M.F."/>
            <person name="Fredrickson J."/>
            <person name="Tiedje J."/>
            <person name="Richardson P."/>
        </authorList>
    </citation>
    <scope>NUCLEOTIDE SEQUENCE [LARGE SCALE GENOMIC DNA]</scope>
    <source>
        <strain>CN-32 / ATCC BAA-453</strain>
    </source>
</reference>
<organism>
    <name type="scientific">Shewanella putrefaciens (strain CN-32 / ATCC BAA-453)</name>
    <dbReference type="NCBI Taxonomy" id="319224"/>
    <lineage>
        <taxon>Bacteria</taxon>
        <taxon>Pseudomonadati</taxon>
        <taxon>Pseudomonadota</taxon>
        <taxon>Gammaproteobacteria</taxon>
        <taxon>Alteromonadales</taxon>
        <taxon>Shewanellaceae</taxon>
        <taxon>Shewanella</taxon>
    </lineage>
</organism>
<sequence>MSDIHEHKILILDFGSQYTQLIARRIREIGVYCELWAWDVTEAQIREFAPNGIILAGGPESVTAENSPRAPEYVFNAGIPVLGICYGMQTMSEQLGGKVIQGVGEGEFGYAQIEMLTKSALFKDIEDAVNSEGKPLLDVWMSHGDKVSAIPEGFVAVAKTDTCPFAAMANEEKRFYGVQFHPEVTHTRQGMRMLSHFALDICGCAANWKPSSIIEDAIERLKKQIGDDEVILGLSGGVDSSVVAMLLHRAIGKKLTCVFVDNGLLRLNEAAQVMEMFGDHFGLNIIHVDAENRFLDAMKGVADPEAKRKIIGRVFVEIFDEESKKCANAKWLAQGTIYPDVIESAGSATGKAHVIKSHHNVGGLPDDMALGLVEPLRELFKDEVRKIGLELGLPYNMLYRHPFPGPGLGVRVLGEVKKEYCDLLRRADAIFIEELHKADLYNKVSQAFTVFLPVRSVGVMGDGRKYDWVVSLRAVETIDFMTAHWAHLPYDFLGRVSNRIINEVDGISRVVYDISGKPPATIEWE</sequence>
<evidence type="ECO:0000255" key="1">
    <source>
        <dbReference type="HAMAP-Rule" id="MF_00344"/>
    </source>
</evidence>
<gene>
    <name evidence="1" type="primary">guaA</name>
    <name type="ordered locus">Sputcn32_2645</name>
</gene>
<protein>
    <recommendedName>
        <fullName evidence="1">GMP synthase [glutamine-hydrolyzing]</fullName>
        <ecNumber evidence="1">6.3.5.2</ecNumber>
    </recommendedName>
    <alternativeName>
        <fullName evidence="1">GMP synthetase</fullName>
    </alternativeName>
    <alternativeName>
        <fullName evidence="1">Glutamine amidotransferase</fullName>
    </alternativeName>
</protein>
<accession>A4Y8T3</accession>
<proteinExistence type="inferred from homology"/>
<keyword id="KW-0067">ATP-binding</keyword>
<keyword id="KW-0315">Glutamine amidotransferase</keyword>
<keyword id="KW-0332">GMP biosynthesis</keyword>
<keyword id="KW-0436">Ligase</keyword>
<keyword id="KW-0547">Nucleotide-binding</keyword>
<keyword id="KW-0658">Purine biosynthesis</keyword>
<name>GUAA_SHEPC</name>
<feature type="chain" id="PRO_1000120406" description="GMP synthase [glutamine-hydrolyzing]">
    <location>
        <begin position="1"/>
        <end position="525"/>
    </location>
</feature>
<feature type="domain" description="Glutamine amidotransferase type-1" evidence="1">
    <location>
        <begin position="8"/>
        <end position="207"/>
    </location>
</feature>
<feature type="domain" description="GMPS ATP-PPase" evidence="1">
    <location>
        <begin position="208"/>
        <end position="400"/>
    </location>
</feature>
<feature type="active site" description="Nucleophile" evidence="1">
    <location>
        <position position="85"/>
    </location>
</feature>
<feature type="active site" evidence="1">
    <location>
        <position position="181"/>
    </location>
</feature>
<feature type="active site" evidence="1">
    <location>
        <position position="183"/>
    </location>
</feature>
<feature type="binding site" evidence="1">
    <location>
        <begin position="235"/>
        <end position="241"/>
    </location>
    <ligand>
        <name>ATP</name>
        <dbReference type="ChEBI" id="CHEBI:30616"/>
    </ligand>
</feature>